<feature type="chain" id="PRO_0000123285" description="Small ribosomal subunit protein uS11">
    <location>
        <begin position="1"/>
        <end position="130"/>
    </location>
</feature>
<protein>
    <recommendedName>
        <fullName evidence="1">Small ribosomal subunit protein uS11</fullName>
    </recommendedName>
    <alternativeName>
        <fullName evidence="2">30S ribosomal protein S11</fullName>
    </alternativeName>
</protein>
<reference key="1">
    <citation type="journal article" date="2000" name="Nature">
        <title>The genome sequence of the thermoacidophilic scavenger Thermoplasma acidophilum.</title>
        <authorList>
            <person name="Ruepp A."/>
            <person name="Graml W."/>
            <person name="Santos-Martinez M.-L."/>
            <person name="Koretke K.K."/>
            <person name="Volker C."/>
            <person name="Mewes H.-W."/>
            <person name="Frishman D."/>
            <person name="Stocker S."/>
            <person name="Lupas A.N."/>
            <person name="Baumeister W."/>
        </authorList>
    </citation>
    <scope>NUCLEOTIDE SEQUENCE [LARGE SCALE GENOMIC DNA]</scope>
    <source>
        <strain>ATCC 25905 / DSM 1728 / JCM 9062 / NBRC 15155 / AMRC-C165</strain>
    </source>
</reference>
<comment type="function">
    <text evidence="1">Located on the platform of the 30S subunit.</text>
</comment>
<comment type="subunit">
    <text evidence="1">Part of the 30S ribosomal subunit.</text>
</comment>
<comment type="similarity">
    <text evidence="1">Belongs to the universal ribosomal protein uS11 family.</text>
</comment>
<dbReference type="EMBL" id="AL445066">
    <property type="protein sequence ID" value="CAC12160.1"/>
    <property type="molecule type" value="Genomic_DNA"/>
</dbReference>
<dbReference type="SMR" id="Q9HJD8"/>
<dbReference type="FunCoup" id="Q9HJD8">
    <property type="interactions" value="172"/>
</dbReference>
<dbReference type="STRING" id="273075.gene:9572252"/>
<dbReference type="PaxDb" id="273075-Ta1031"/>
<dbReference type="EnsemblBacteria" id="CAC12160">
    <property type="protein sequence ID" value="CAC12160"/>
    <property type="gene ID" value="CAC12160"/>
</dbReference>
<dbReference type="KEGG" id="tac:Ta1031"/>
<dbReference type="eggNOG" id="arCOG04240">
    <property type="taxonomic scope" value="Archaea"/>
</dbReference>
<dbReference type="HOGENOM" id="CLU_072439_6_1_2"/>
<dbReference type="InParanoid" id="Q9HJD8"/>
<dbReference type="Proteomes" id="UP000001024">
    <property type="component" value="Chromosome"/>
</dbReference>
<dbReference type="GO" id="GO:1990904">
    <property type="term" value="C:ribonucleoprotein complex"/>
    <property type="evidence" value="ECO:0007669"/>
    <property type="project" value="UniProtKB-KW"/>
</dbReference>
<dbReference type="GO" id="GO:0005840">
    <property type="term" value="C:ribosome"/>
    <property type="evidence" value="ECO:0007669"/>
    <property type="project" value="UniProtKB-KW"/>
</dbReference>
<dbReference type="GO" id="GO:0019843">
    <property type="term" value="F:rRNA binding"/>
    <property type="evidence" value="ECO:0007669"/>
    <property type="project" value="UniProtKB-UniRule"/>
</dbReference>
<dbReference type="GO" id="GO:0003735">
    <property type="term" value="F:structural constituent of ribosome"/>
    <property type="evidence" value="ECO:0007669"/>
    <property type="project" value="InterPro"/>
</dbReference>
<dbReference type="GO" id="GO:0006412">
    <property type="term" value="P:translation"/>
    <property type="evidence" value="ECO:0007669"/>
    <property type="project" value="UniProtKB-UniRule"/>
</dbReference>
<dbReference type="FunFam" id="3.30.420.80:FF:000018">
    <property type="entry name" value="40S ribosomal protein S14"/>
    <property type="match status" value="1"/>
</dbReference>
<dbReference type="Gene3D" id="3.30.420.80">
    <property type="entry name" value="Ribosomal protein S11"/>
    <property type="match status" value="1"/>
</dbReference>
<dbReference type="HAMAP" id="MF_01310">
    <property type="entry name" value="Ribosomal_uS11"/>
    <property type="match status" value="1"/>
</dbReference>
<dbReference type="InterPro" id="IPR001971">
    <property type="entry name" value="Ribosomal_uS11"/>
</dbReference>
<dbReference type="InterPro" id="IPR019961">
    <property type="entry name" value="Ribosomal_uS11_archaeal"/>
</dbReference>
<dbReference type="InterPro" id="IPR018102">
    <property type="entry name" value="Ribosomal_uS11_CS"/>
</dbReference>
<dbReference type="InterPro" id="IPR036967">
    <property type="entry name" value="Ribosomal_uS11_sf"/>
</dbReference>
<dbReference type="NCBIfam" id="TIGR03628">
    <property type="entry name" value="arch_S11P"/>
    <property type="match status" value="1"/>
</dbReference>
<dbReference type="NCBIfam" id="NF007176">
    <property type="entry name" value="PRK09607.1"/>
    <property type="match status" value="1"/>
</dbReference>
<dbReference type="PANTHER" id="PTHR11759">
    <property type="entry name" value="40S RIBOSOMAL PROTEIN S14/30S RIBOSOMAL PROTEIN S11"/>
    <property type="match status" value="1"/>
</dbReference>
<dbReference type="Pfam" id="PF00411">
    <property type="entry name" value="Ribosomal_S11"/>
    <property type="match status" value="1"/>
</dbReference>
<dbReference type="PIRSF" id="PIRSF002131">
    <property type="entry name" value="Ribosomal_S11"/>
    <property type="match status" value="1"/>
</dbReference>
<dbReference type="SUPFAM" id="SSF53137">
    <property type="entry name" value="Translational machinery components"/>
    <property type="match status" value="1"/>
</dbReference>
<dbReference type="PROSITE" id="PS00054">
    <property type="entry name" value="RIBOSOMAL_S11"/>
    <property type="match status" value="1"/>
</dbReference>
<accession>Q9HJD8</accession>
<gene>
    <name evidence="1" type="primary">rps11</name>
    <name type="ordered locus">Ta1031</name>
</gene>
<organism>
    <name type="scientific">Thermoplasma acidophilum (strain ATCC 25905 / DSM 1728 / JCM 9062 / NBRC 15155 / AMRC-C165)</name>
    <dbReference type="NCBI Taxonomy" id="273075"/>
    <lineage>
        <taxon>Archaea</taxon>
        <taxon>Methanobacteriati</taxon>
        <taxon>Thermoplasmatota</taxon>
        <taxon>Thermoplasmata</taxon>
        <taxon>Thermoplasmatales</taxon>
        <taxon>Thermoplasmataceae</taxon>
        <taxon>Thermoplasma</taxon>
    </lineage>
</organism>
<sequence>MRQMNKTGIAHIYASQNNTIIHVTDPTGAETIAMVSGGMVVKNDRDQASPYAAMKAADMVSEALKEKEITDLIIKVRAPGGNKSKIPGPGAQAAIRALSRAGLKIVRIEEVTPIPHDGTKKKGGKRGRRV</sequence>
<proteinExistence type="inferred from homology"/>
<keyword id="KW-1185">Reference proteome</keyword>
<keyword id="KW-0687">Ribonucleoprotein</keyword>
<keyword id="KW-0689">Ribosomal protein</keyword>
<keyword id="KW-0694">RNA-binding</keyword>
<keyword id="KW-0699">rRNA-binding</keyword>
<name>RS11_THEAC</name>
<evidence type="ECO:0000255" key="1">
    <source>
        <dbReference type="HAMAP-Rule" id="MF_01310"/>
    </source>
</evidence>
<evidence type="ECO:0000305" key="2"/>